<protein>
    <recommendedName>
        <fullName evidence="1">Tyrosine--tRNA ligase</fullName>
        <ecNumber evidence="1">6.1.1.1</ecNumber>
    </recommendedName>
    <alternativeName>
        <fullName evidence="1">Tyrosyl-tRNA synthetase</fullName>
        <shortName evidence="1">TyrRS</shortName>
    </alternativeName>
</protein>
<evidence type="ECO:0000255" key="1">
    <source>
        <dbReference type="HAMAP-Rule" id="MF_02006"/>
    </source>
</evidence>
<name>SYY_RHIME</name>
<keyword id="KW-0030">Aminoacyl-tRNA synthetase</keyword>
<keyword id="KW-0067">ATP-binding</keyword>
<keyword id="KW-0963">Cytoplasm</keyword>
<keyword id="KW-0436">Ligase</keyword>
<keyword id="KW-0547">Nucleotide-binding</keyword>
<keyword id="KW-0648">Protein biosynthesis</keyword>
<keyword id="KW-1185">Reference proteome</keyword>
<keyword id="KW-0694">RNA-binding</keyword>
<accession>Q92PK5</accession>
<organism>
    <name type="scientific">Rhizobium meliloti (strain 1021)</name>
    <name type="common">Ensifer meliloti</name>
    <name type="synonym">Sinorhizobium meliloti</name>
    <dbReference type="NCBI Taxonomy" id="266834"/>
    <lineage>
        <taxon>Bacteria</taxon>
        <taxon>Pseudomonadati</taxon>
        <taxon>Pseudomonadota</taxon>
        <taxon>Alphaproteobacteria</taxon>
        <taxon>Hyphomicrobiales</taxon>
        <taxon>Rhizobiaceae</taxon>
        <taxon>Sinorhizobium/Ensifer group</taxon>
        <taxon>Sinorhizobium</taxon>
    </lineage>
</organism>
<feature type="chain" id="PRO_0000234755" description="Tyrosine--tRNA ligase">
    <location>
        <begin position="1"/>
        <end position="417"/>
    </location>
</feature>
<feature type="domain" description="S4 RNA-binding" evidence="1">
    <location>
        <begin position="350"/>
        <end position="417"/>
    </location>
</feature>
<feature type="short sequence motif" description="'HIGH' region">
    <location>
        <begin position="44"/>
        <end position="53"/>
    </location>
</feature>
<feature type="short sequence motif" description="'KMSKS' region">
    <location>
        <begin position="236"/>
        <end position="240"/>
    </location>
</feature>
<feature type="binding site" evidence="1">
    <location>
        <position position="39"/>
    </location>
    <ligand>
        <name>L-tyrosine</name>
        <dbReference type="ChEBI" id="CHEBI:58315"/>
    </ligand>
</feature>
<feature type="binding site" evidence="1">
    <location>
        <position position="176"/>
    </location>
    <ligand>
        <name>L-tyrosine</name>
        <dbReference type="ChEBI" id="CHEBI:58315"/>
    </ligand>
</feature>
<feature type="binding site" evidence="1">
    <location>
        <position position="180"/>
    </location>
    <ligand>
        <name>L-tyrosine</name>
        <dbReference type="ChEBI" id="CHEBI:58315"/>
    </ligand>
</feature>
<feature type="binding site" evidence="1">
    <location>
        <position position="239"/>
    </location>
    <ligand>
        <name>ATP</name>
        <dbReference type="ChEBI" id="CHEBI:30616"/>
    </ligand>
</feature>
<dbReference type="EC" id="6.1.1.1" evidence="1"/>
<dbReference type="EMBL" id="AL591688">
    <property type="protein sequence ID" value="CAC46318.1"/>
    <property type="molecule type" value="Genomic_DNA"/>
</dbReference>
<dbReference type="RefSeq" id="NP_385845.1">
    <property type="nucleotide sequence ID" value="NC_003047.1"/>
</dbReference>
<dbReference type="RefSeq" id="WP_003531473.1">
    <property type="nucleotide sequence ID" value="NC_003047.1"/>
</dbReference>
<dbReference type="SMR" id="Q92PK5"/>
<dbReference type="EnsemblBacteria" id="CAC46318">
    <property type="protein sequence ID" value="CAC46318"/>
    <property type="gene ID" value="SMc00526"/>
</dbReference>
<dbReference type="GeneID" id="89576086"/>
<dbReference type="KEGG" id="sme:SMc00526"/>
<dbReference type="PATRIC" id="fig|266834.11.peg.3178"/>
<dbReference type="eggNOG" id="COG0162">
    <property type="taxonomic scope" value="Bacteria"/>
</dbReference>
<dbReference type="HOGENOM" id="CLU_024003_0_3_5"/>
<dbReference type="OrthoDB" id="9804243at2"/>
<dbReference type="Proteomes" id="UP000001976">
    <property type="component" value="Chromosome"/>
</dbReference>
<dbReference type="GO" id="GO:0005829">
    <property type="term" value="C:cytosol"/>
    <property type="evidence" value="ECO:0007669"/>
    <property type="project" value="TreeGrafter"/>
</dbReference>
<dbReference type="GO" id="GO:0005524">
    <property type="term" value="F:ATP binding"/>
    <property type="evidence" value="ECO:0007669"/>
    <property type="project" value="UniProtKB-UniRule"/>
</dbReference>
<dbReference type="GO" id="GO:0003723">
    <property type="term" value="F:RNA binding"/>
    <property type="evidence" value="ECO:0007669"/>
    <property type="project" value="UniProtKB-KW"/>
</dbReference>
<dbReference type="GO" id="GO:0004831">
    <property type="term" value="F:tyrosine-tRNA ligase activity"/>
    <property type="evidence" value="ECO:0007669"/>
    <property type="project" value="UniProtKB-UniRule"/>
</dbReference>
<dbReference type="GO" id="GO:0006437">
    <property type="term" value="P:tyrosyl-tRNA aminoacylation"/>
    <property type="evidence" value="ECO:0007669"/>
    <property type="project" value="UniProtKB-UniRule"/>
</dbReference>
<dbReference type="CDD" id="cd00165">
    <property type="entry name" value="S4"/>
    <property type="match status" value="1"/>
</dbReference>
<dbReference type="CDD" id="cd00805">
    <property type="entry name" value="TyrRS_core"/>
    <property type="match status" value="1"/>
</dbReference>
<dbReference type="FunFam" id="1.10.240.10:FF:000001">
    <property type="entry name" value="Tyrosine--tRNA ligase"/>
    <property type="match status" value="1"/>
</dbReference>
<dbReference type="FunFam" id="3.40.50.620:FF:000008">
    <property type="entry name" value="Tyrosine--tRNA ligase"/>
    <property type="match status" value="1"/>
</dbReference>
<dbReference type="Gene3D" id="3.40.50.620">
    <property type="entry name" value="HUPs"/>
    <property type="match status" value="1"/>
</dbReference>
<dbReference type="Gene3D" id="3.10.290.10">
    <property type="entry name" value="RNA-binding S4 domain"/>
    <property type="match status" value="1"/>
</dbReference>
<dbReference type="Gene3D" id="1.10.240.10">
    <property type="entry name" value="Tyrosyl-Transfer RNA Synthetase"/>
    <property type="match status" value="1"/>
</dbReference>
<dbReference type="HAMAP" id="MF_02006">
    <property type="entry name" value="Tyr_tRNA_synth_type1"/>
    <property type="match status" value="1"/>
</dbReference>
<dbReference type="InterPro" id="IPR001412">
    <property type="entry name" value="aa-tRNA-synth_I_CS"/>
</dbReference>
<dbReference type="InterPro" id="IPR002305">
    <property type="entry name" value="aa-tRNA-synth_Ic"/>
</dbReference>
<dbReference type="InterPro" id="IPR014729">
    <property type="entry name" value="Rossmann-like_a/b/a_fold"/>
</dbReference>
<dbReference type="InterPro" id="IPR036986">
    <property type="entry name" value="S4_RNA-bd_sf"/>
</dbReference>
<dbReference type="InterPro" id="IPR054608">
    <property type="entry name" value="SYY-like_C"/>
</dbReference>
<dbReference type="InterPro" id="IPR002307">
    <property type="entry name" value="Tyr-tRNA-ligase"/>
</dbReference>
<dbReference type="InterPro" id="IPR024088">
    <property type="entry name" value="Tyr-tRNA-ligase_bac-type"/>
</dbReference>
<dbReference type="InterPro" id="IPR024107">
    <property type="entry name" value="Tyr-tRNA-ligase_bac_1"/>
</dbReference>
<dbReference type="NCBIfam" id="TIGR00234">
    <property type="entry name" value="tyrS"/>
    <property type="match status" value="1"/>
</dbReference>
<dbReference type="PANTHER" id="PTHR11766:SF0">
    <property type="entry name" value="TYROSINE--TRNA LIGASE, MITOCHONDRIAL"/>
    <property type="match status" value="1"/>
</dbReference>
<dbReference type="PANTHER" id="PTHR11766">
    <property type="entry name" value="TYROSYL-TRNA SYNTHETASE"/>
    <property type="match status" value="1"/>
</dbReference>
<dbReference type="Pfam" id="PF22421">
    <property type="entry name" value="SYY_C-terminal"/>
    <property type="match status" value="1"/>
</dbReference>
<dbReference type="Pfam" id="PF00579">
    <property type="entry name" value="tRNA-synt_1b"/>
    <property type="match status" value="1"/>
</dbReference>
<dbReference type="PRINTS" id="PR01040">
    <property type="entry name" value="TRNASYNTHTYR"/>
</dbReference>
<dbReference type="SUPFAM" id="SSF55174">
    <property type="entry name" value="Alpha-L RNA-binding motif"/>
    <property type="match status" value="1"/>
</dbReference>
<dbReference type="SUPFAM" id="SSF52374">
    <property type="entry name" value="Nucleotidylyl transferase"/>
    <property type="match status" value="1"/>
</dbReference>
<dbReference type="PROSITE" id="PS00178">
    <property type="entry name" value="AA_TRNA_LIGASE_I"/>
    <property type="match status" value="1"/>
</dbReference>
<dbReference type="PROSITE" id="PS50889">
    <property type="entry name" value="S4"/>
    <property type="match status" value="1"/>
</dbReference>
<gene>
    <name evidence="1" type="primary">tyrS</name>
    <name type="ordered locus">R01739</name>
    <name type="ORF">SMc00526</name>
</gene>
<reference key="1">
    <citation type="journal article" date="2001" name="Proc. Natl. Acad. Sci. U.S.A.">
        <title>Analysis of the chromosome sequence of the legume symbiont Sinorhizobium meliloti strain 1021.</title>
        <authorList>
            <person name="Capela D."/>
            <person name="Barloy-Hubler F."/>
            <person name="Gouzy J."/>
            <person name="Bothe G."/>
            <person name="Ampe F."/>
            <person name="Batut J."/>
            <person name="Boistard P."/>
            <person name="Becker A."/>
            <person name="Boutry M."/>
            <person name="Cadieu E."/>
            <person name="Dreano S."/>
            <person name="Gloux S."/>
            <person name="Godrie T."/>
            <person name="Goffeau A."/>
            <person name="Kahn D."/>
            <person name="Kiss E."/>
            <person name="Lelaure V."/>
            <person name="Masuy D."/>
            <person name="Pohl T."/>
            <person name="Portetelle D."/>
            <person name="Puehler A."/>
            <person name="Purnelle B."/>
            <person name="Ramsperger U."/>
            <person name="Renard C."/>
            <person name="Thebault P."/>
            <person name="Vandenbol M."/>
            <person name="Weidner S."/>
            <person name="Galibert F."/>
        </authorList>
    </citation>
    <scope>NUCLEOTIDE SEQUENCE [LARGE SCALE GENOMIC DNA]</scope>
    <source>
        <strain>1021</strain>
    </source>
</reference>
<reference key="2">
    <citation type="journal article" date="2001" name="Science">
        <title>The composite genome of the legume symbiont Sinorhizobium meliloti.</title>
        <authorList>
            <person name="Galibert F."/>
            <person name="Finan T.M."/>
            <person name="Long S.R."/>
            <person name="Puehler A."/>
            <person name="Abola P."/>
            <person name="Ampe F."/>
            <person name="Barloy-Hubler F."/>
            <person name="Barnett M.J."/>
            <person name="Becker A."/>
            <person name="Boistard P."/>
            <person name="Bothe G."/>
            <person name="Boutry M."/>
            <person name="Bowser L."/>
            <person name="Buhrmester J."/>
            <person name="Cadieu E."/>
            <person name="Capela D."/>
            <person name="Chain P."/>
            <person name="Cowie A."/>
            <person name="Davis R.W."/>
            <person name="Dreano S."/>
            <person name="Federspiel N.A."/>
            <person name="Fisher R.F."/>
            <person name="Gloux S."/>
            <person name="Godrie T."/>
            <person name="Goffeau A."/>
            <person name="Golding B."/>
            <person name="Gouzy J."/>
            <person name="Gurjal M."/>
            <person name="Hernandez-Lucas I."/>
            <person name="Hong A."/>
            <person name="Huizar L."/>
            <person name="Hyman R.W."/>
            <person name="Jones T."/>
            <person name="Kahn D."/>
            <person name="Kahn M.L."/>
            <person name="Kalman S."/>
            <person name="Keating D.H."/>
            <person name="Kiss E."/>
            <person name="Komp C."/>
            <person name="Lelaure V."/>
            <person name="Masuy D."/>
            <person name="Palm C."/>
            <person name="Peck M.C."/>
            <person name="Pohl T.M."/>
            <person name="Portetelle D."/>
            <person name="Purnelle B."/>
            <person name="Ramsperger U."/>
            <person name="Surzycki R."/>
            <person name="Thebault P."/>
            <person name="Vandenbol M."/>
            <person name="Vorhoelter F.J."/>
            <person name="Weidner S."/>
            <person name="Wells D.H."/>
            <person name="Wong K."/>
            <person name="Yeh K.-C."/>
            <person name="Batut J."/>
        </authorList>
    </citation>
    <scope>NUCLEOTIDE SEQUENCE [LARGE SCALE GENOMIC DNA]</scope>
    <source>
        <strain>1021</strain>
    </source>
</reference>
<sequence length="417" mass="45890">MSEFKSDFLHTLSERGFIHQTSDDAGLDQLFRTETVTAYIGFDPTAASLHAGGLIQIMMLHWLQATGHRPISLMGGGTGMVGDPSFKDEARQLMTPETIAANIASIKTVFSNYLRYGDGPKDALMINNADWLLGINYLEFLRDVGRHFSVNRMLSFDSVKMRLEREQSLSFLEFNYMILQAYDFVELYERTGCRLQMGGSDQWGNIVNGIDLGHRMGTPQLYALTSPLLTTASGAKMGKSLSGAVWLNPDMLGPYEFWQYWRNTEDADVARFLKLYTTLPMAEINRLSKLGGSEINEVKKVLATEVTAMLHGRAAAEQAAETARKTFEEGALAENLPSVEVPAPELESGLGLLTLLVRAGLAASNGEARRHVQGGAVRINDDQVSDERRVIGSGDVTGDGVIKLSLGKKKHLLVRPV</sequence>
<comment type="function">
    <text evidence="1">Catalyzes the attachment of tyrosine to tRNA(Tyr) in a two-step reaction: tyrosine is first activated by ATP to form Tyr-AMP and then transferred to the acceptor end of tRNA(Tyr).</text>
</comment>
<comment type="catalytic activity">
    <reaction evidence="1">
        <text>tRNA(Tyr) + L-tyrosine + ATP = L-tyrosyl-tRNA(Tyr) + AMP + diphosphate + H(+)</text>
        <dbReference type="Rhea" id="RHEA:10220"/>
        <dbReference type="Rhea" id="RHEA-COMP:9706"/>
        <dbReference type="Rhea" id="RHEA-COMP:9707"/>
        <dbReference type="ChEBI" id="CHEBI:15378"/>
        <dbReference type="ChEBI" id="CHEBI:30616"/>
        <dbReference type="ChEBI" id="CHEBI:33019"/>
        <dbReference type="ChEBI" id="CHEBI:58315"/>
        <dbReference type="ChEBI" id="CHEBI:78442"/>
        <dbReference type="ChEBI" id="CHEBI:78536"/>
        <dbReference type="ChEBI" id="CHEBI:456215"/>
        <dbReference type="EC" id="6.1.1.1"/>
    </reaction>
</comment>
<comment type="subunit">
    <text evidence="1">Homodimer.</text>
</comment>
<comment type="subcellular location">
    <subcellularLocation>
        <location evidence="1">Cytoplasm</location>
    </subcellularLocation>
</comment>
<comment type="similarity">
    <text evidence="1">Belongs to the class-I aminoacyl-tRNA synthetase family. TyrS type 1 subfamily.</text>
</comment>
<proteinExistence type="inferred from homology"/>